<protein>
    <recommendedName>
        <fullName evidence="1">Glycerol-3-phosphate dehydrogenase [NAD(P)+]</fullName>
        <ecNumber evidence="1">1.1.1.94</ecNumber>
    </recommendedName>
    <alternativeName>
        <fullName evidence="1">NAD(P)(+)-dependent glycerol-3-phosphate dehydrogenase</fullName>
    </alternativeName>
    <alternativeName>
        <fullName evidence="1">NAD(P)H-dependent dihydroxyacetone-phosphate reductase</fullName>
    </alternativeName>
</protein>
<keyword id="KW-0963">Cytoplasm</keyword>
<keyword id="KW-0444">Lipid biosynthesis</keyword>
<keyword id="KW-0443">Lipid metabolism</keyword>
<keyword id="KW-0520">NAD</keyword>
<keyword id="KW-0521">NADP</keyword>
<keyword id="KW-0547">Nucleotide-binding</keyword>
<keyword id="KW-0560">Oxidoreductase</keyword>
<keyword id="KW-0594">Phospholipid biosynthesis</keyword>
<keyword id="KW-1208">Phospholipid metabolism</keyword>
<name>GPDA_YERP3</name>
<evidence type="ECO:0000255" key="1">
    <source>
        <dbReference type="HAMAP-Rule" id="MF_00394"/>
    </source>
</evidence>
<organism>
    <name type="scientific">Yersinia pseudotuberculosis serotype O:1b (strain IP 31758)</name>
    <dbReference type="NCBI Taxonomy" id="349747"/>
    <lineage>
        <taxon>Bacteria</taxon>
        <taxon>Pseudomonadati</taxon>
        <taxon>Pseudomonadota</taxon>
        <taxon>Gammaproteobacteria</taxon>
        <taxon>Enterobacterales</taxon>
        <taxon>Yersiniaceae</taxon>
        <taxon>Yersinia</taxon>
    </lineage>
</organism>
<feature type="chain" id="PRO_1000060790" description="Glycerol-3-phosphate dehydrogenase [NAD(P)+]">
    <location>
        <begin position="1"/>
        <end position="339"/>
    </location>
</feature>
<feature type="active site" description="Proton acceptor" evidence="1">
    <location>
        <position position="195"/>
    </location>
</feature>
<feature type="binding site" evidence="1">
    <location>
        <position position="15"/>
    </location>
    <ligand>
        <name>NADPH</name>
        <dbReference type="ChEBI" id="CHEBI:57783"/>
    </ligand>
</feature>
<feature type="binding site" evidence="1">
    <location>
        <position position="16"/>
    </location>
    <ligand>
        <name>NADPH</name>
        <dbReference type="ChEBI" id="CHEBI:57783"/>
    </ligand>
</feature>
<feature type="binding site" evidence="1">
    <location>
        <position position="36"/>
    </location>
    <ligand>
        <name>NADPH</name>
        <dbReference type="ChEBI" id="CHEBI:57783"/>
    </ligand>
</feature>
<feature type="binding site" evidence="1">
    <location>
        <position position="110"/>
    </location>
    <ligand>
        <name>NADPH</name>
        <dbReference type="ChEBI" id="CHEBI:57783"/>
    </ligand>
</feature>
<feature type="binding site" evidence="1">
    <location>
        <position position="110"/>
    </location>
    <ligand>
        <name>sn-glycerol 3-phosphate</name>
        <dbReference type="ChEBI" id="CHEBI:57597"/>
    </ligand>
</feature>
<feature type="binding site" evidence="1">
    <location>
        <position position="139"/>
    </location>
    <ligand>
        <name>sn-glycerol 3-phosphate</name>
        <dbReference type="ChEBI" id="CHEBI:57597"/>
    </ligand>
</feature>
<feature type="binding site" evidence="1">
    <location>
        <position position="141"/>
    </location>
    <ligand>
        <name>sn-glycerol 3-phosphate</name>
        <dbReference type="ChEBI" id="CHEBI:57597"/>
    </ligand>
</feature>
<feature type="binding site" evidence="1">
    <location>
        <position position="143"/>
    </location>
    <ligand>
        <name>NADPH</name>
        <dbReference type="ChEBI" id="CHEBI:57783"/>
    </ligand>
</feature>
<feature type="binding site" evidence="1">
    <location>
        <position position="195"/>
    </location>
    <ligand>
        <name>sn-glycerol 3-phosphate</name>
        <dbReference type="ChEBI" id="CHEBI:57597"/>
    </ligand>
</feature>
<feature type="binding site" evidence="1">
    <location>
        <position position="248"/>
    </location>
    <ligand>
        <name>sn-glycerol 3-phosphate</name>
        <dbReference type="ChEBI" id="CHEBI:57597"/>
    </ligand>
</feature>
<feature type="binding site" evidence="1">
    <location>
        <position position="258"/>
    </location>
    <ligand>
        <name>sn-glycerol 3-phosphate</name>
        <dbReference type="ChEBI" id="CHEBI:57597"/>
    </ligand>
</feature>
<feature type="binding site" evidence="1">
    <location>
        <position position="259"/>
    </location>
    <ligand>
        <name>NADPH</name>
        <dbReference type="ChEBI" id="CHEBI:57783"/>
    </ligand>
</feature>
<feature type="binding site" evidence="1">
    <location>
        <position position="259"/>
    </location>
    <ligand>
        <name>sn-glycerol 3-phosphate</name>
        <dbReference type="ChEBI" id="CHEBI:57597"/>
    </ligand>
</feature>
<feature type="binding site" evidence="1">
    <location>
        <position position="260"/>
    </location>
    <ligand>
        <name>sn-glycerol 3-phosphate</name>
        <dbReference type="ChEBI" id="CHEBI:57597"/>
    </ligand>
</feature>
<feature type="binding site" evidence="1">
    <location>
        <position position="283"/>
    </location>
    <ligand>
        <name>NADPH</name>
        <dbReference type="ChEBI" id="CHEBI:57783"/>
    </ligand>
</feature>
<feature type="binding site" evidence="1">
    <location>
        <position position="285"/>
    </location>
    <ligand>
        <name>NADPH</name>
        <dbReference type="ChEBI" id="CHEBI:57783"/>
    </ligand>
</feature>
<comment type="function">
    <text evidence="1">Catalyzes the reduction of the glycolytic intermediate dihydroxyacetone phosphate (DHAP) to sn-glycerol 3-phosphate (G3P), the key precursor for phospholipid synthesis.</text>
</comment>
<comment type="catalytic activity">
    <reaction evidence="1">
        <text>sn-glycerol 3-phosphate + NAD(+) = dihydroxyacetone phosphate + NADH + H(+)</text>
        <dbReference type="Rhea" id="RHEA:11092"/>
        <dbReference type="ChEBI" id="CHEBI:15378"/>
        <dbReference type="ChEBI" id="CHEBI:57540"/>
        <dbReference type="ChEBI" id="CHEBI:57597"/>
        <dbReference type="ChEBI" id="CHEBI:57642"/>
        <dbReference type="ChEBI" id="CHEBI:57945"/>
        <dbReference type="EC" id="1.1.1.94"/>
    </reaction>
    <physiologicalReaction direction="right-to-left" evidence="1">
        <dbReference type="Rhea" id="RHEA:11094"/>
    </physiologicalReaction>
</comment>
<comment type="catalytic activity">
    <reaction evidence="1">
        <text>sn-glycerol 3-phosphate + NADP(+) = dihydroxyacetone phosphate + NADPH + H(+)</text>
        <dbReference type="Rhea" id="RHEA:11096"/>
        <dbReference type="ChEBI" id="CHEBI:15378"/>
        <dbReference type="ChEBI" id="CHEBI:57597"/>
        <dbReference type="ChEBI" id="CHEBI:57642"/>
        <dbReference type="ChEBI" id="CHEBI:57783"/>
        <dbReference type="ChEBI" id="CHEBI:58349"/>
        <dbReference type="EC" id="1.1.1.94"/>
    </reaction>
    <physiologicalReaction direction="right-to-left" evidence="1">
        <dbReference type="Rhea" id="RHEA:11098"/>
    </physiologicalReaction>
</comment>
<comment type="pathway">
    <text evidence="1">Membrane lipid metabolism; glycerophospholipid metabolism.</text>
</comment>
<comment type="subcellular location">
    <subcellularLocation>
        <location evidence="1">Cytoplasm</location>
    </subcellularLocation>
</comment>
<comment type="similarity">
    <text evidence="1">Belongs to the NAD-dependent glycerol-3-phosphate dehydrogenase family.</text>
</comment>
<reference key="1">
    <citation type="journal article" date="2007" name="PLoS Genet.">
        <title>The complete genome sequence of Yersinia pseudotuberculosis IP31758, the causative agent of Far East scarlet-like fever.</title>
        <authorList>
            <person name="Eppinger M."/>
            <person name="Rosovitz M.J."/>
            <person name="Fricke W.F."/>
            <person name="Rasko D.A."/>
            <person name="Kokorina G."/>
            <person name="Fayolle C."/>
            <person name="Lindler L.E."/>
            <person name="Carniel E."/>
            <person name="Ravel J."/>
        </authorList>
    </citation>
    <scope>NUCLEOTIDE SEQUENCE [LARGE SCALE GENOMIC DNA]</scope>
    <source>
        <strain>IP 31758</strain>
    </source>
</reference>
<accession>A7FCV2</accession>
<dbReference type="EC" id="1.1.1.94" evidence="1"/>
<dbReference type="EMBL" id="CP000720">
    <property type="protein sequence ID" value="ABS49115.1"/>
    <property type="molecule type" value="Genomic_DNA"/>
</dbReference>
<dbReference type="RefSeq" id="WP_002208975.1">
    <property type="nucleotide sequence ID" value="NC_009708.1"/>
</dbReference>
<dbReference type="SMR" id="A7FCV2"/>
<dbReference type="GeneID" id="57974523"/>
<dbReference type="KEGG" id="ypi:YpsIP31758_0079"/>
<dbReference type="HOGENOM" id="CLU_033449_0_2_6"/>
<dbReference type="UniPathway" id="UPA00940"/>
<dbReference type="Proteomes" id="UP000002412">
    <property type="component" value="Chromosome"/>
</dbReference>
<dbReference type="GO" id="GO:0005829">
    <property type="term" value="C:cytosol"/>
    <property type="evidence" value="ECO:0007669"/>
    <property type="project" value="TreeGrafter"/>
</dbReference>
<dbReference type="GO" id="GO:0047952">
    <property type="term" value="F:glycerol-3-phosphate dehydrogenase [NAD(P)+] activity"/>
    <property type="evidence" value="ECO:0007669"/>
    <property type="project" value="UniProtKB-UniRule"/>
</dbReference>
<dbReference type="GO" id="GO:0051287">
    <property type="term" value="F:NAD binding"/>
    <property type="evidence" value="ECO:0007669"/>
    <property type="project" value="InterPro"/>
</dbReference>
<dbReference type="GO" id="GO:0005975">
    <property type="term" value="P:carbohydrate metabolic process"/>
    <property type="evidence" value="ECO:0007669"/>
    <property type="project" value="InterPro"/>
</dbReference>
<dbReference type="GO" id="GO:0046167">
    <property type="term" value="P:glycerol-3-phosphate biosynthetic process"/>
    <property type="evidence" value="ECO:0007669"/>
    <property type="project" value="UniProtKB-UniRule"/>
</dbReference>
<dbReference type="GO" id="GO:0046168">
    <property type="term" value="P:glycerol-3-phosphate catabolic process"/>
    <property type="evidence" value="ECO:0007669"/>
    <property type="project" value="InterPro"/>
</dbReference>
<dbReference type="GO" id="GO:0046474">
    <property type="term" value="P:glycerophospholipid biosynthetic process"/>
    <property type="evidence" value="ECO:0007669"/>
    <property type="project" value="TreeGrafter"/>
</dbReference>
<dbReference type="FunFam" id="1.10.1040.10:FF:000001">
    <property type="entry name" value="Glycerol-3-phosphate dehydrogenase [NAD(P)+]"/>
    <property type="match status" value="1"/>
</dbReference>
<dbReference type="FunFam" id="3.40.50.720:FF:000019">
    <property type="entry name" value="Glycerol-3-phosphate dehydrogenase [NAD(P)+]"/>
    <property type="match status" value="1"/>
</dbReference>
<dbReference type="Gene3D" id="1.10.1040.10">
    <property type="entry name" value="N-(1-d-carboxylethyl)-l-norvaline Dehydrogenase, domain 2"/>
    <property type="match status" value="1"/>
</dbReference>
<dbReference type="Gene3D" id="3.40.50.720">
    <property type="entry name" value="NAD(P)-binding Rossmann-like Domain"/>
    <property type="match status" value="1"/>
</dbReference>
<dbReference type="HAMAP" id="MF_00394">
    <property type="entry name" value="NAD_Glyc3P_dehydrog"/>
    <property type="match status" value="1"/>
</dbReference>
<dbReference type="InterPro" id="IPR008927">
    <property type="entry name" value="6-PGluconate_DH-like_C_sf"/>
</dbReference>
<dbReference type="InterPro" id="IPR013328">
    <property type="entry name" value="6PGD_dom2"/>
</dbReference>
<dbReference type="InterPro" id="IPR006168">
    <property type="entry name" value="G3P_DH_NAD-dep"/>
</dbReference>
<dbReference type="InterPro" id="IPR006109">
    <property type="entry name" value="G3P_DH_NAD-dep_C"/>
</dbReference>
<dbReference type="InterPro" id="IPR011128">
    <property type="entry name" value="G3P_DH_NAD-dep_N"/>
</dbReference>
<dbReference type="InterPro" id="IPR036291">
    <property type="entry name" value="NAD(P)-bd_dom_sf"/>
</dbReference>
<dbReference type="NCBIfam" id="NF000939">
    <property type="entry name" value="PRK00094.1-1"/>
    <property type="match status" value="1"/>
</dbReference>
<dbReference type="NCBIfam" id="NF000940">
    <property type="entry name" value="PRK00094.1-2"/>
    <property type="match status" value="1"/>
</dbReference>
<dbReference type="NCBIfam" id="NF000942">
    <property type="entry name" value="PRK00094.1-4"/>
    <property type="match status" value="1"/>
</dbReference>
<dbReference type="PANTHER" id="PTHR11728">
    <property type="entry name" value="GLYCEROL-3-PHOSPHATE DEHYDROGENASE"/>
    <property type="match status" value="1"/>
</dbReference>
<dbReference type="PANTHER" id="PTHR11728:SF1">
    <property type="entry name" value="GLYCEROL-3-PHOSPHATE DEHYDROGENASE [NAD(+)] 2, CHLOROPLASTIC"/>
    <property type="match status" value="1"/>
</dbReference>
<dbReference type="Pfam" id="PF07479">
    <property type="entry name" value="NAD_Gly3P_dh_C"/>
    <property type="match status" value="1"/>
</dbReference>
<dbReference type="Pfam" id="PF01210">
    <property type="entry name" value="NAD_Gly3P_dh_N"/>
    <property type="match status" value="1"/>
</dbReference>
<dbReference type="PIRSF" id="PIRSF000114">
    <property type="entry name" value="Glycerol-3-P_dh"/>
    <property type="match status" value="1"/>
</dbReference>
<dbReference type="PRINTS" id="PR00077">
    <property type="entry name" value="GPDHDRGNASE"/>
</dbReference>
<dbReference type="SUPFAM" id="SSF48179">
    <property type="entry name" value="6-phosphogluconate dehydrogenase C-terminal domain-like"/>
    <property type="match status" value="1"/>
</dbReference>
<dbReference type="SUPFAM" id="SSF51735">
    <property type="entry name" value="NAD(P)-binding Rossmann-fold domains"/>
    <property type="match status" value="1"/>
</dbReference>
<dbReference type="PROSITE" id="PS00957">
    <property type="entry name" value="NAD_G3PDH"/>
    <property type="match status" value="1"/>
</dbReference>
<proteinExistence type="inferred from homology"/>
<gene>
    <name evidence="1" type="primary">gpsA</name>
    <name type="ordered locus">YpsIP31758_0079</name>
</gene>
<sequence>MNTNPASMAVIGAGSYGTALAITLARNGHQVVLWGHDPKHIQQLQQDRCNRAFLPDAAFPDTLRLETDLACALAASRDVLVVVPSHVFGAVLHQLKPHLRKDARIVWATKGLEAETGRLLQDVAREVLGEAIPLAVISGPTFAKELAAGLPTAIALASTDVQFSEDLQQLLHCGKSFRVYSNPDFIGVQLGGAVKNVIAIGAGMSDGIGFGANARTALITRGLAEMTRLGTALGADPSTFMGMAGLGDLVLTCTDNQSRNRRFGIMLGQGLGVKEAQDNIGQVVEGYRNTKEVLALAQRHGVEMPITEQIYQVLYCHKNAREAALTLLGRTKKDEKIGI</sequence>